<feature type="chain" id="PRO_1000050191" description="4-hydroxy-tetrahydrodipicolinate synthase">
    <location>
        <begin position="1"/>
        <end position="290"/>
    </location>
</feature>
<feature type="active site" description="Proton donor/acceptor" evidence="1">
    <location>
        <position position="132"/>
    </location>
</feature>
<feature type="active site" description="Schiff-base intermediate with substrate" evidence="1">
    <location>
        <position position="160"/>
    </location>
</feature>
<feature type="binding site" evidence="1">
    <location>
        <position position="44"/>
    </location>
    <ligand>
        <name>pyruvate</name>
        <dbReference type="ChEBI" id="CHEBI:15361"/>
    </ligand>
</feature>
<feature type="binding site" evidence="1">
    <location>
        <position position="202"/>
    </location>
    <ligand>
        <name>pyruvate</name>
        <dbReference type="ChEBI" id="CHEBI:15361"/>
    </ligand>
</feature>
<feature type="site" description="Part of a proton relay during catalysis" evidence="1">
    <location>
        <position position="43"/>
    </location>
</feature>
<feature type="site" description="Part of a proton relay during catalysis" evidence="1">
    <location>
        <position position="106"/>
    </location>
</feature>
<organism>
    <name type="scientific">Geobacter sulfurreducens (strain ATCC 51573 / DSM 12127 / PCA)</name>
    <dbReference type="NCBI Taxonomy" id="243231"/>
    <lineage>
        <taxon>Bacteria</taxon>
        <taxon>Pseudomonadati</taxon>
        <taxon>Thermodesulfobacteriota</taxon>
        <taxon>Desulfuromonadia</taxon>
        <taxon>Geobacterales</taxon>
        <taxon>Geobacteraceae</taxon>
        <taxon>Geobacter</taxon>
    </lineage>
</organism>
<reference key="1">
    <citation type="journal article" date="2003" name="Science">
        <title>Genome of Geobacter sulfurreducens: metal reduction in subsurface environments.</title>
        <authorList>
            <person name="Methe B.A."/>
            <person name="Nelson K.E."/>
            <person name="Eisen J.A."/>
            <person name="Paulsen I.T."/>
            <person name="Nelson W.C."/>
            <person name="Heidelberg J.F."/>
            <person name="Wu D."/>
            <person name="Wu M."/>
            <person name="Ward N.L."/>
            <person name="Beanan M.J."/>
            <person name="Dodson R.J."/>
            <person name="Madupu R."/>
            <person name="Brinkac L.M."/>
            <person name="Daugherty S.C."/>
            <person name="DeBoy R.T."/>
            <person name="Durkin A.S."/>
            <person name="Gwinn M.L."/>
            <person name="Kolonay J.F."/>
            <person name="Sullivan S.A."/>
            <person name="Haft D.H."/>
            <person name="Selengut J."/>
            <person name="Davidsen T.M."/>
            <person name="Zafar N."/>
            <person name="White O."/>
            <person name="Tran B."/>
            <person name="Romero C."/>
            <person name="Forberger H.A."/>
            <person name="Weidman J.F."/>
            <person name="Khouri H.M."/>
            <person name="Feldblyum T.V."/>
            <person name="Utterback T.R."/>
            <person name="Van Aken S.E."/>
            <person name="Lovley D.R."/>
            <person name="Fraser C.M."/>
        </authorList>
    </citation>
    <scope>NUCLEOTIDE SEQUENCE [LARGE SCALE GENOMIC DNA]</scope>
    <source>
        <strain>ATCC 51573 / DSM 12127 / PCA</strain>
    </source>
</reference>
<comment type="function">
    <text evidence="1">Catalyzes the condensation of (S)-aspartate-beta-semialdehyde [(S)-ASA] and pyruvate to 4-hydroxy-tetrahydrodipicolinate (HTPA).</text>
</comment>
<comment type="catalytic activity">
    <reaction evidence="1">
        <text>L-aspartate 4-semialdehyde + pyruvate = (2S,4S)-4-hydroxy-2,3,4,5-tetrahydrodipicolinate + H2O + H(+)</text>
        <dbReference type="Rhea" id="RHEA:34171"/>
        <dbReference type="ChEBI" id="CHEBI:15361"/>
        <dbReference type="ChEBI" id="CHEBI:15377"/>
        <dbReference type="ChEBI" id="CHEBI:15378"/>
        <dbReference type="ChEBI" id="CHEBI:67139"/>
        <dbReference type="ChEBI" id="CHEBI:537519"/>
        <dbReference type="EC" id="4.3.3.7"/>
    </reaction>
</comment>
<comment type="pathway">
    <text evidence="1">Amino-acid biosynthesis; L-lysine biosynthesis via DAP pathway; (S)-tetrahydrodipicolinate from L-aspartate: step 3/4.</text>
</comment>
<comment type="subunit">
    <text evidence="1">Homotetramer; dimer of dimers.</text>
</comment>
<comment type="subcellular location">
    <subcellularLocation>
        <location evidence="1">Cytoplasm</location>
    </subcellularLocation>
</comment>
<comment type="similarity">
    <text evidence="1">Belongs to the DapA family.</text>
</comment>
<comment type="caution">
    <text evidence="2">Was originally thought to be a dihydrodipicolinate synthase (DHDPS), catalyzing the condensation of (S)-aspartate-beta-semialdehyde [(S)-ASA] and pyruvate to dihydrodipicolinate (DHDP). However, it was shown in E.coli that the product of the enzymatic reaction is not dihydrodipicolinate but in fact (4S)-4-hydroxy-2,3,4,5-tetrahydro-(2S)-dipicolinic acid (HTPA), and that the consecutive dehydration reaction leading to DHDP is not spontaneous but catalyzed by DapB.</text>
</comment>
<sequence>MFKGSIVAIVTPFTNGAVDQEKLRELVEFQITNGTDAIVPCGTTGESSTLDYDEHMDVVKIVIEQVNKRVPVIAGTGSNSTAEAIELSRKAKEAGADGVLLVTPYYNKPTQEGLVRHYTAIADAVAIPQILYNVPGRTGVNMLPETVARLAPHKNIVAIKEATGSLQQASEILALCGDQIDVLSGDDFITFPMMACGAKGVISVLANIMPKAVADLTDAFFAGDLETARRLHLNTLKISNAMFIESNPIPVKTALGLMGKCSDEVRLPLCPMSEGNKAKLTAIMKEYQLI</sequence>
<proteinExistence type="inferred from homology"/>
<name>DAPA_GEOSL</name>
<protein>
    <recommendedName>
        <fullName evidence="1">4-hydroxy-tetrahydrodipicolinate synthase</fullName>
        <shortName evidence="1">HTPA synthase</shortName>
        <ecNumber evidence="1">4.3.3.7</ecNumber>
    </recommendedName>
</protein>
<evidence type="ECO:0000255" key="1">
    <source>
        <dbReference type="HAMAP-Rule" id="MF_00418"/>
    </source>
</evidence>
<evidence type="ECO:0000305" key="2"/>
<gene>
    <name evidence="1" type="primary">dapA</name>
    <name type="ordered locus">GSU0159</name>
</gene>
<accession>Q74GT6</accession>
<dbReference type="EC" id="4.3.3.7" evidence="1"/>
<dbReference type="EMBL" id="AE017180">
    <property type="protein sequence ID" value="AAR33494.1"/>
    <property type="molecule type" value="Genomic_DNA"/>
</dbReference>
<dbReference type="RefSeq" id="NP_951221.1">
    <property type="nucleotide sequence ID" value="NC_002939.5"/>
</dbReference>
<dbReference type="RefSeq" id="WP_010940835.1">
    <property type="nucleotide sequence ID" value="NC_002939.5"/>
</dbReference>
<dbReference type="SMR" id="Q74GT6"/>
<dbReference type="FunCoup" id="Q74GT6">
    <property type="interactions" value="520"/>
</dbReference>
<dbReference type="STRING" id="243231.GSU0159"/>
<dbReference type="EnsemblBacteria" id="AAR33494">
    <property type="protein sequence ID" value="AAR33494"/>
    <property type="gene ID" value="GSU0159"/>
</dbReference>
<dbReference type="KEGG" id="gsu:GSU0159"/>
<dbReference type="PATRIC" id="fig|243231.5.peg.160"/>
<dbReference type="eggNOG" id="COG0329">
    <property type="taxonomic scope" value="Bacteria"/>
</dbReference>
<dbReference type="HOGENOM" id="CLU_049343_7_1_7"/>
<dbReference type="InParanoid" id="Q74GT6"/>
<dbReference type="OrthoDB" id="9782828at2"/>
<dbReference type="UniPathway" id="UPA00034">
    <property type="reaction ID" value="UER00017"/>
</dbReference>
<dbReference type="Proteomes" id="UP000000577">
    <property type="component" value="Chromosome"/>
</dbReference>
<dbReference type="GO" id="GO:0005829">
    <property type="term" value="C:cytosol"/>
    <property type="evidence" value="ECO:0000318"/>
    <property type="project" value="GO_Central"/>
</dbReference>
<dbReference type="GO" id="GO:0008840">
    <property type="term" value="F:4-hydroxy-tetrahydrodipicolinate synthase activity"/>
    <property type="evidence" value="ECO:0000318"/>
    <property type="project" value="GO_Central"/>
</dbReference>
<dbReference type="GO" id="GO:0019877">
    <property type="term" value="P:diaminopimelate biosynthetic process"/>
    <property type="evidence" value="ECO:0007669"/>
    <property type="project" value="UniProtKB-UniRule"/>
</dbReference>
<dbReference type="GO" id="GO:0009089">
    <property type="term" value="P:lysine biosynthetic process via diaminopimelate"/>
    <property type="evidence" value="ECO:0007669"/>
    <property type="project" value="UniProtKB-UniRule"/>
</dbReference>
<dbReference type="CDD" id="cd00950">
    <property type="entry name" value="DHDPS"/>
    <property type="match status" value="1"/>
</dbReference>
<dbReference type="Gene3D" id="3.20.20.70">
    <property type="entry name" value="Aldolase class I"/>
    <property type="match status" value="1"/>
</dbReference>
<dbReference type="HAMAP" id="MF_00418">
    <property type="entry name" value="DapA"/>
    <property type="match status" value="1"/>
</dbReference>
<dbReference type="InterPro" id="IPR013785">
    <property type="entry name" value="Aldolase_TIM"/>
</dbReference>
<dbReference type="InterPro" id="IPR005263">
    <property type="entry name" value="DapA"/>
</dbReference>
<dbReference type="InterPro" id="IPR002220">
    <property type="entry name" value="DapA-like"/>
</dbReference>
<dbReference type="InterPro" id="IPR020625">
    <property type="entry name" value="Schiff_base-form_aldolases_AS"/>
</dbReference>
<dbReference type="InterPro" id="IPR020624">
    <property type="entry name" value="Schiff_base-form_aldolases_CS"/>
</dbReference>
<dbReference type="NCBIfam" id="TIGR00674">
    <property type="entry name" value="dapA"/>
    <property type="match status" value="1"/>
</dbReference>
<dbReference type="PANTHER" id="PTHR12128:SF66">
    <property type="entry name" value="4-HYDROXY-2-OXOGLUTARATE ALDOLASE, MITOCHONDRIAL"/>
    <property type="match status" value="1"/>
</dbReference>
<dbReference type="PANTHER" id="PTHR12128">
    <property type="entry name" value="DIHYDRODIPICOLINATE SYNTHASE"/>
    <property type="match status" value="1"/>
</dbReference>
<dbReference type="Pfam" id="PF00701">
    <property type="entry name" value="DHDPS"/>
    <property type="match status" value="1"/>
</dbReference>
<dbReference type="PIRSF" id="PIRSF001365">
    <property type="entry name" value="DHDPS"/>
    <property type="match status" value="1"/>
</dbReference>
<dbReference type="PRINTS" id="PR00146">
    <property type="entry name" value="DHPICSNTHASE"/>
</dbReference>
<dbReference type="SMART" id="SM01130">
    <property type="entry name" value="DHDPS"/>
    <property type="match status" value="1"/>
</dbReference>
<dbReference type="SUPFAM" id="SSF51569">
    <property type="entry name" value="Aldolase"/>
    <property type="match status" value="1"/>
</dbReference>
<dbReference type="PROSITE" id="PS00665">
    <property type="entry name" value="DHDPS_1"/>
    <property type="match status" value="1"/>
</dbReference>
<dbReference type="PROSITE" id="PS00666">
    <property type="entry name" value="DHDPS_2"/>
    <property type="match status" value="1"/>
</dbReference>
<keyword id="KW-0028">Amino-acid biosynthesis</keyword>
<keyword id="KW-0963">Cytoplasm</keyword>
<keyword id="KW-0220">Diaminopimelate biosynthesis</keyword>
<keyword id="KW-0456">Lyase</keyword>
<keyword id="KW-0457">Lysine biosynthesis</keyword>
<keyword id="KW-1185">Reference proteome</keyword>
<keyword id="KW-0704">Schiff base</keyword>